<sequence>MKFKLLLAGSLVAVGAMALLASNINEKEKQRVELAKAPSEAGIAGKEKSEEWAKYYPRQFDSWKKTKEYDSFTDMLAKDPALVIAWSGYAFSKDYNSPRGHYYALQDNVNSLRTGAPVDAKTGPLPTACWTCKSPDVPRLIEEDGELEYFTGKWAKYGSQIVNVIGCANCHDDKTAELKVRVPHLNRGLQAAGLKTFEESTHQDKRTLVCAQCHVEYYFKKTEWKDAKGADKTAMVVTLPWANGVGKDGNAGVEGMIKYYDEINFSDWTHNISKTPMLKAQHPGFEFWKSGIHGQKGVSCADCHMPYTQEGSVKYSDHQVKENPLDSMDQSCMNCHRESESKLRGIVHQKYERKEFLNKVAFDNIGKAHLETGKAIEAGASDEELKEVRKLIRHGQFKADMAIAAHGNYFHAPEETLRLLAAGSDDAQKARLLLVKILAKHGVMDYIAPDFDTKDKAQKLAKVDIAALAAEKMKFKQTLEQEWKKEAKAKGRANPELYKDVDTINDGKSSWNKK</sequence>
<reference key="1">
    <citation type="journal article" date="1999" name="Nature">
        <title>Structure of cytochrome c nitrite reductase.</title>
        <authorList>
            <person name="Einsle O."/>
            <person name="Messerschmidt A."/>
            <person name="Stach P."/>
            <person name="Bourenkov G.P."/>
            <person name="Bartunik H.D."/>
            <person name="Huber R."/>
            <person name="Kroneck P.M.H."/>
        </authorList>
    </citation>
    <scope>NUCLEOTIDE SEQUENCE [GENOMIC DNA]</scope>
    <scope>X-RAY CRYSTALLOGRAPHY (1.9 ANGSTROMS) IN COMPLEX WITH CALCIUM; HEME AND SULFATE</scope>
    <scope>COFACTOR</scope>
    <scope>SUBUNIT</scope>
</reference>
<reference key="2">
    <citation type="journal article" date="1994" name="Biochem. Biophys. Res. Commun.">
        <title>Ammonia-forming cytochrome c nitrite reductase from Sulfurospirillum deleyianum is a tetraheme protein: new aspects of the molecular composition and spectroscopic properties.</title>
        <authorList>
            <person name="Schumacher W."/>
            <person name="Hole U."/>
            <person name="Kroneck P.M.H."/>
        </authorList>
    </citation>
    <scope>FUNCTION</scope>
    <scope>CATALYTIC ACTIVITY</scope>
    <scope>SUBUNIT</scope>
    <scope>HEME-BINDING</scope>
    <scope>COFACTOR</scope>
</reference>
<accession>Q9Z4P4</accession>
<keyword id="KW-0002">3D-structure</keyword>
<keyword id="KW-0106">Calcium</keyword>
<keyword id="KW-0249">Electron transport</keyword>
<keyword id="KW-0349">Heme</keyword>
<keyword id="KW-0408">Iron</keyword>
<keyword id="KW-0479">Metal-binding</keyword>
<keyword id="KW-0560">Oxidoreductase</keyword>
<keyword id="KW-0574">Periplasm</keyword>
<keyword id="KW-0732">Signal</keyword>
<keyword id="KW-0813">Transport</keyword>
<name>NRFA_SULDE</name>
<evidence type="ECO:0000250" key="1">
    <source>
        <dbReference type="UniProtKB" id="L0DSL2"/>
    </source>
</evidence>
<evidence type="ECO:0000269" key="2">
    <source>
    </source>
</evidence>
<evidence type="ECO:0000269" key="3">
    <source>
    </source>
</evidence>
<evidence type="ECO:0000303" key="4">
    <source>
    </source>
</evidence>
<evidence type="ECO:0000303" key="5">
    <source>
    </source>
</evidence>
<evidence type="ECO:0000305" key="6"/>
<evidence type="ECO:0000305" key="7">
    <source>
    </source>
</evidence>
<evidence type="ECO:0007744" key="8">
    <source>
        <dbReference type="PDB" id="1QDB"/>
    </source>
</evidence>
<evidence type="ECO:0007829" key="9">
    <source>
        <dbReference type="PDB" id="1QDB"/>
    </source>
</evidence>
<protein>
    <recommendedName>
        <fullName>Cytochrome c-552</fullName>
        <ecNumber evidence="3">1.7.2.2</ecNumber>
    </recommendedName>
    <alternativeName>
        <fullName evidence="5">Ammonia-forming cytochrome c nitrite reductase</fullName>
        <shortName evidence="4 5">Cytochrome c nitrite reductase</shortName>
    </alternativeName>
</protein>
<feature type="signal peptide">
    <location>
        <begin position="1"/>
        <end position="21"/>
    </location>
</feature>
<feature type="chain" id="PRO_0000006583" description="Cytochrome c-552">
    <location>
        <begin position="22"/>
        <end position="514"/>
    </location>
</feature>
<feature type="binding site" description="axial binding residue" evidence="8">
    <location>
        <position position="101"/>
    </location>
    <ligand>
        <name>heme c</name>
        <dbReference type="ChEBI" id="CHEBI:61717"/>
        <label>3</label>
    </ligand>
    <ligandPart>
        <name>Fe</name>
        <dbReference type="ChEBI" id="CHEBI:18248"/>
    </ligandPart>
</feature>
<feature type="binding site" description="covalent" evidence="8">
    <location>
        <position position="129"/>
    </location>
    <ligand>
        <name>heme c</name>
        <dbReference type="ChEBI" id="CHEBI:61717"/>
        <label>1</label>
    </ligand>
</feature>
<feature type="binding site" description="covalent" evidence="8">
    <location>
        <position position="132"/>
    </location>
    <ligand>
        <name>heme c</name>
        <dbReference type="ChEBI" id="CHEBI:61717"/>
        <label>1</label>
    </ligand>
</feature>
<feature type="binding site" description="axial binding residue" evidence="8">
    <location>
        <position position="133"/>
    </location>
    <ligand>
        <name>heme c</name>
        <dbReference type="ChEBI" id="CHEBI:61717"/>
        <label>1</label>
    </ligand>
    <ligandPart>
        <name>Fe</name>
        <dbReference type="ChEBI" id="CHEBI:18248"/>
    </ligandPart>
</feature>
<feature type="binding site" description="covalent" evidence="8">
    <location>
        <position position="167"/>
    </location>
    <ligand>
        <name>heme c</name>
        <dbReference type="ChEBI" id="CHEBI:61717"/>
        <label>2</label>
    </ligand>
</feature>
<feature type="binding site" description="covalent" evidence="8">
    <location>
        <position position="170"/>
    </location>
    <ligand>
        <name>heme c</name>
        <dbReference type="ChEBI" id="CHEBI:61717"/>
        <label>2</label>
    </ligand>
</feature>
<feature type="binding site" description="axial binding residue" evidence="8">
    <location>
        <position position="171"/>
    </location>
    <ligand>
        <name>heme c</name>
        <dbReference type="ChEBI" id="CHEBI:61717"/>
        <label>2</label>
    </ligand>
    <ligandPart>
        <name>Fe</name>
        <dbReference type="ChEBI" id="CHEBI:18248"/>
    </ligandPart>
</feature>
<feature type="binding site" description="covalent" evidence="8">
    <location>
        <position position="210"/>
    </location>
    <ligand>
        <name>heme c</name>
        <dbReference type="ChEBI" id="CHEBI:61717"/>
        <label>3</label>
    </ligand>
</feature>
<feature type="binding site" description="covalent" evidence="8">
    <location>
        <position position="213"/>
    </location>
    <ligand>
        <name>heme c</name>
        <dbReference type="ChEBI" id="CHEBI:61717"/>
        <label>3</label>
    </ligand>
</feature>
<feature type="binding site" description="axial binding residue" evidence="8">
    <location>
        <position position="214"/>
    </location>
    <ligand>
        <name>heme c</name>
        <dbReference type="ChEBI" id="CHEBI:61717"/>
        <label>3</label>
    </ligand>
    <ligandPart>
        <name>Fe</name>
        <dbReference type="ChEBI" id="CHEBI:18248"/>
    </ligandPart>
</feature>
<feature type="binding site" evidence="8">
    <location>
        <position position="216"/>
    </location>
    <ligand>
        <name>Ca(2+)</name>
        <dbReference type="ChEBI" id="CHEBI:29108"/>
    </ligand>
</feature>
<feature type="binding site" evidence="8">
    <location>
        <position position="217"/>
    </location>
    <ligand>
        <name>Ca(2+)</name>
        <dbReference type="ChEBI" id="CHEBI:29108"/>
    </ligand>
</feature>
<feature type="binding site">
    <location>
        <position position="217"/>
    </location>
    <ligand>
        <name>substrate</name>
    </ligand>
</feature>
<feature type="binding site" evidence="8">
    <location>
        <position position="279"/>
    </location>
    <ligand>
        <name>Ca(2+)</name>
        <dbReference type="ChEBI" id="CHEBI:29108"/>
    </ligand>
</feature>
<feature type="binding site" evidence="8">
    <location>
        <position position="281"/>
    </location>
    <ligand>
        <name>Ca(2+)</name>
        <dbReference type="ChEBI" id="CHEBI:29108"/>
    </ligand>
</feature>
<feature type="binding site">
    <location>
        <position position="282"/>
    </location>
    <ligand>
        <name>substrate</name>
    </ligand>
</feature>
<feature type="binding site" description="axial binding residue" evidence="8">
    <location>
        <position position="293"/>
    </location>
    <ligand>
        <name>heme c</name>
        <dbReference type="ChEBI" id="CHEBI:61717"/>
        <label>5</label>
    </ligand>
    <ligandPart>
        <name>Fe</name>
        <dbReference type="ChEBI" id="CHEBI:18248"/>
    </ligandPart>
</feature>
<feature type="binding site" description="covalent" evidence="8">
    <location>
        <position position="300"/>
    </location>
    <ligand>
        <name>heme c</name>
        <dbReference type="ChEBI" id="CHEBI:61717"/>
        <label>4</label>
    </ligand>
</feature>
<feature type="binding site" description="covalent" evidence="8">
    <location>
        <position position="303"/>
    </location>
    <ligand>
        <name>heme c</name>
        <dbReference type="ChEBI" id="CHEBI:61717"/>
        <label>4</label>
    </ligand>
</feature>
<feature type="binding site" description="axial binding residue" evidence="8">
    <location>
        <position position="304"/>
    </location>
    <ligand>
        <name>heme c</name>
        <dbReference type="ChEBI" id="CHEBI:61717"/>
        <label>4</label>
    </ligand>
    <ligandPart>
        <name>Fe</name>
        <dbReference type="ChEBI" id="CHEBI:18248"/>
    </ligandPart>
</feature>
<feature type="binding site" description="axial binding residue" evidence="8">
    <location>
        <position position="318"/>
    </location>
    <ligand>
        <name>heme c</name>
        <dbReference type="ChEBI" id="CHEBI:61717"/>
        <label>2</label>
    </ligand>
    <ligandPart>
        <name>Fe</name>
        <dbReference type="ChEBI" id="CHEBI:18248"/>
    </ligandPart>
</feature>
<feature type="binding site" description="covalent" evidence="8">
    <location>
        <position position="332"/>
    </location>
    <ligand>
        <name>heme c</name>
        <dbReference type="ChEBI" id="CHEBI:61717"/>
        <label>5</label>
    </ligand>
</feature>
<feature type="binding site" description="covalent" evidence="8">
    <location>
        <position position="335"/>
    </location>
    <ligand>
        <name>heme c</name>
        <dbReference type="ChEBI" id="CHEBI:61717"/>
        <label>5</label>
    </ligand>
</feature>
<feature type="binding site" description="axial binding residue" evidence="8">
    <location>
        <position position="336"/>
    </location>
    <ligand>
        <name>heme c</name>
        <dbReference type="ChEBI" id="CHEBI:61717"/>
        <label>5</label>
    </ligand>
    <ligandPart>
        <name>Fe</name>
        <dbReference type="ChEBI" id="CHEBI:18248"/>
    </ligandPart>
</feature>
<feature type="binding site" description="axial binding residue" evidence="8">
    <location>
        <position position="411"/>
    </location>
    <ligand>
        <name>heme c</name>
        <dbReference type="ChEBI" id="CHEBI:61717"/>
        <label>4</label>
    </ligand>
    <ligandPart>
        <name>Fe</name>
        <dbReference type="ChEBI" id="CHEBI:18248"/>
    </ligandPart>
</feature>
<feature type="turn" evidence="9">
    <location>
        <begin position="44"/>
        <end position="47"/>
    </location>
</feature>
<feature type="helix" evidence="9">
    <location>
        <begin position="49"/>
        <end position="54"/>
    </location>
</feature>
<feature type="helix" evidence="9">
    <location>
        <begin position="57"/>
        <end position="64"/>
    </location>
</feature>
<feature type="helix" evidence="9">
    <location>
        <begin position="65"/>
        <end position="68"/>
    </location>
</feature>
<feature type="helix" evidence="9">
    <location>
        <begin position="75"/>
        <end position="78"/>
    </location>
</feature>
<feature type="helix" evidence="9">
    <location>
        <begin position="81"/>
        <end position="85"/>
    </location>
</feature>
<feature type="turn" evidence="9">
    <location>
        <begin position="86"/>
        <end position="88"/>
    </location>
</feature>
<feature type="helix" evidence="9">
    <location>
        <begin position="90"/>
        <end position="92"/>
    </location>
</feature>
<feature type="helix" evidence="9">
    <location>
        <begin position="101"/>
        <end position="103"/>
    </location>
</feature>
<feature type="helix" evidence="9">
    <location>
        <begin position="104"/>
        <end position="110"/>
    </location>
</feature>
<feature type="helix" evidence="9">
    <location>
        <begin position="112"/>
        <end position="114"/>
    </location>
</feature>
<feature type="strand" evidence="9">
    <location>
        <begin position="123"/>
        <end position="126"/>
    </location>
</feature>
<feature type="helix" evidence="9">
    <location>
        <begin position="127"/>
        <end position="130"/>
    </location>
</feature>
<feature type="turn" evidence="9">
    <location>
        <begin position="131"/>
        <end position="133"/>
    </location>
</feature>
<feature type="helix" evidence="9">
    <location>
        <begin position="136"/>
        <end position="144"/>
    </location>
</feature>
<feature type="helix" evidence="9">
    <location>
        <begin position="146"/>
        <end position="149"/>
    </location>
</feature>
<feature type="strand" evidence="9">
    <location>
        <begin position="151"/>
        <end position="153"/>
    </location>
</feature>
<feature type="helix" evidence="9">
    <location>
        <begin position="154"/>
        <end position="157"/>
    </location>
</feature>
<feature type="turn" evidence="9">
    <location>
        <begin position="158"/>
        <end position="160"/>
    </location>
</feature>
<feature type="helix" evidence="9">
    <location>
        <begin position="167"/>
        <end position="170"/>
    </location>
</feature>
<feature type="turn" evidence="9">
    <location>
        <begin position="173"/>
        <end position="175"/>
    </location>
</feature>
<feature type="helix" evidence="9">
    <location>
        <begin position="184"/>
        <end position="191"/>
    </location>
</feature>
<feature type="helix" evidence="9">
    <location>
        <begin position="197"/>
        <end position="199"/>
    </location>
</feature>
<feature type="helix" evidence="9">
    <location>
        <begin position="202"/>
        <end position="211"/>
    </location>
</feature>
<feature type="strand" evidence="9">
    <location>
        <begin position="218"/>
        <end position="225"/>
    </location>
</feature>
<feature type="strand" evidence="9">
    <location>
        <begin position="231"/>
        <end position="238"/>
    </location>
</feature>
<feature type="strand" evidence="9">
    <location>
        <begin position="245"/>
        <end position="247"/>
    </location>
</feature>
<feature type="helix" evidence="9">
    <location>
        <begin position="253"/>
        <end position="262"/>
    </location>
</feature>
<feature type="strand" evidence="9">
    <location>
        <begin position="267"/>
        <end position="269"/>
    </location>
</feature>
<feature type="turn" evidence="9">
    <location>
        <begin position="271"/>
        <end position="273"/>
    </location>
</feature>
<feature type="helix" evidence="9">
    <location>
        <begin position="284"/>
        <end position="290"/>
    </location>
</feature>
<feature type="helix" evidence="9">
    <location>
        <begin position="292"/>
        <end position="295"/>
    </location>
</feature>
<feature type="helix" evidence="9">
    <location>
        <begin position="300"/>
        <end position="304"/>
    </location>
</feature>
<feature type="strand" evidence="9">
    <location>
        <begin position="307"/>
        <end position="310"/>
    </location>
</feature>
<feature type="strand" evidence="9">
    <location>
        <begin position="313"/>
        <end position="316"/>
    </location>
</feature>
<feature type="helix" evidence="9">
    <location>
        <begin position="324"/>
        <end position="327"/>
    </location>
</feature>
<feature type="helix" evidence="9">
    <location>
        <begin position="328"/>
        <end position="331"/>
    </location>
</feature>
<feature type="turn" evidence="9">
    <location>
        <begin position="332"/>
        <end position="335"/>
    </location>
</feature>
<feature type="helix" evidence="9">
    <location>
        <begin position="340"/>
        <end position="377"/>
    </location>
</feature>
<feature type="turn" evidence="9">
    <location>
        <begin position="382"/>
        <end position="385"/>
    </location>
</feature>
<feature type="helix" evidence="9">
    <location>
        <begin position="386"/>
        <end position="404"/>
    </location>
</feature>
<feature type="helix" evidence="9">
    <location>
        <begin position="408"/>
        <end position="411"/>
    </location>
</feature>
<feature type="helix" evidence="9">
    <location>
        <begin position="413"/>
        <end position="440"/>
    </location>
</feature>
<feature type="helix" evidence="9">
    <location>
        <begin position="454"/>
        <end position="461"/>
    </location>
</feature>
<feature type="helix" evidence="9">
    <location>
        <begin position="465"/>
        <end position="477"/>
    </location>
</feature>
<feature type="helix" evidence="9">
    <location>
        <begin position="479"/>
        <end position="489"/>
    </location>
</feature>
<feature type="helix" evidence="9">
    <location>
        <begin position="495"/>
        <end position="497"/>
    </location>
</feature>
<feature type="helix" evidence="9">
    <location>
        <begin position="499"/>
        <end position="501"/>
    </location>
</feature>
<dbReference type="EC" id="1.7.2.2" evidence="3"/>
<dbReference type="EMBL" id="AJ133037">
    <property type="protein sequence ID" value="CAB37320.2"/>
    <property type="status" value="ALT_INIT"/>
    <property type="molecule type" value="mRNA"/>
</dbReference>
<dbReference type="PDB" id="1QDB">
    <property type="method" value="X-ray"/>
    <property type="resolution" value="1.90 A"/>
    <property type="chains" value="A/B/C=42-514"/>
</dbReference>
<dbReference type="PDBsum" id="1QDB"/>
<dbReference type="SMR" id="Q9Z4P4"/>
<dbReference type="OMA" id="INRACQT"/>
<dbReference type="UniPathway" id="UPA00653"/>
<dbReference type="EvolutionaryTrace" id="Q9Z4P4"/>
<dbReference type="GO" id="GO:0030288">
    <property type="term" value="C:outer membrane-bounded periplasmic space"/>
    <property type="evidence" value="ECO:0007669"/>
    <property type="project" value="TreeGrafter"/>
</dbReference>
<dbReference type="GO" id="GO:0005509">
    <property type="term" value="F:calcium ion binding"/>
    <property type="evidence" value="ECO:0007669"/>
    <property type="project" value="InterPro"/>
</dbReference>
<dbReference type="GO" id="GO:0020037">
    <property type="term" value="F:heme binding"/>
    <property type="evidence" value="ECO:0007669"/>
    <property type="project" value="InterPro"/>
</dbReference>
<dbReference type="GO" id="GO:0042279">
    <property type="term" value="F:nitrite reductase (cytochrome, ammonia-forming) activity"/>
    <property type="evidence" value="ECO:0007669"/>
    <property type="project" value="UniProtKB-EC"/>
</dbReference>
<dbReference type="GO" id="GO:0019645">
    <property type="term" value="P:anaerobic electron transport chain"/>
    <property type="evidence" value="ECO:0007669"/>
    <property type="project" value="TreeGrafter"/>
</dbReference>
<dbReference type="GO" id="GO:0042128">
    <property type="term" value="P:nitrate assimilation"/>
    <property type="evidence" value="ECO:0007669"/>
    <property type="project" value="UniProtKB-UniPathway"/>
</dbReference>
<dbReference type="CDD" id="cd00548">
    <property type="entry name" value="NrfA-like"/>
    <property type="match status" value="1"/>
</dbReference>
<dbReference type="Gene3D" id="1.20.140.10">
    <property type="entry name" value="Butyryl-CoA Dehydrogenase, subunit A, domain 3"/>
    <property type="match status" value="1"/>
</dbReference>
<dbReference type="Gene3D" id="1.10.1130.10">
    <property type="entry name" value="Flavocytochrome C3, Chain A"/>
    <property type="match status" value="1"/>
</dbReference>
<dbReference type="HAMAP" id="MF_01182">
    <property type="entry name" value="Cytochrom_C552"/>
    <property type="match status" value="1"/>
</dbReference>
<dbReference type="InterPro" id="IPR003321">
    <property type="entry name" value="Cyt_c552"/>
</dbReference>
<dbReference type="InterPro" id="IPR017570">
    <property type="entry name" value="Cyt_c_NO2Rdtase_formate-dep"/>
</dbReference>
<dbReference type="InterPro" id="IPR036280">
    <property type="entry name" value="Multihaem_cyt_sf"/>
</dbReference>
<dbReference type="NCBIfam" id="NF008339">
    <property type="entry name" value="PRK11125.1"/>
    <property type="match status" value="1"/>
</dbReference>
<dbReference type="PANTHER" id="PTHR30633:SF0">
    <property type="entry name" value="CYTOCHROME C-552"/>
    <property type="match status" value="1"/>
</dbReference>
<dbReference type="PANTHER" id="PTHR30633">
    <property type="entry name" value="CYTOCHROME C-552 RESPIRATORY NITRITE REDUCTASE"/>
    <property type="match status" value="1"/>
</dbReference>
<dbReference type="Pfam" id="PF02335">
    <property type="entry name" value="Cytochrom_C552"/>
    <property type="match status" value="1"/>
</dbReference>
<dbReference type="PIRSF" id="PIRSF000243">
    <property type="entry name" value="Cyt_c552"/>
    <property type="match status" value="1"/>
</dbReference>
<dbReference type="SUPFAM" id="SSF48695">
    <property type="entry name" value="Multiheme cytochromes"/>
    <property type="match status" value="1"/>
</dbReference>
<dbReference type="PROSITE" id="PS51008">
    <property type="entry name" value="MULTIHEME_CYTC"/>
    <property type="match status" value="1"/>
</dbReference>
<gene>
    <name type="primary">nrfA</name>
</gene>
<proteinExistence type="evidence at protein level"/>
<comment type="function">
    <text evidence="1 3">Catalyzes the reduction of nitrite to ammonia, consuming six electrons in the process (PubMed:7999130). Has very low activity toward hydroxylamine, and even lower activity toward sulfite. Sulfite reductase activity is maximal at neutral pH (By similarity).</text>
</comment>
<comment type="catalytic activity">
    <reaction evidence="3">
        <text>6 Fe(III)-[cytochrome c] + NH4(+) + 2 H2O = 6 Fe(II)-[cytochrome c] + nitrite + 8 H(+)</text>
        <dbReference type="Rhea" id="RHEA:13089"/>
        <dbReference type="Rhea" id="RHEA-COMP:10350"/>
        <dbReference type="Rhea" id="RHEA-COMP:14399"/>
        <dbReference type="ChEBI" id="CHEBI:15377"/>
        <dbReference type="ChEBI" id="CHEBI:15378"/>
        <dbReference type="ChEBI" id="CHEBI:16301"/>
        <dbReference type="ChEBI" id="CHEBI:28938"/>
        <dbReference type="ChEBI" id="CHEBI:29033"/>
        <dbReference type="ChEBI" id="CHEBI:29034"/>
        <dbReference type="EC" id="1.7.2.2"/>
    </reaction>
</comment>
<comment type="cofactor">
    <cofactor>
        <name>Ca(2+)</name>
        <dbReference type="ChEBI" id="CHEBI:29108"/>
    </cofactor>
    <text evidence="2">Binds 1 Ca(2+) ion per monomer.</text>
</comment>
<comment type="cofactor">
    <cofactor evidence="2 3">
        <name>heme c</name>
        <dbReference type="ChEBI" id="CHEBI:61717"/>
    </cofactor>
    <text evidence="2">Binds 5 heme c groups covalently per monomer.</text>
</comment>
<comment type="pathway">
    <text evidence="7">Nitrogen metabolism; nitrate reduction (assimilation).</text>
</comment>
<comment type="subunit">
    <text evidence="2 3">Homodimer (PubMed:7999130). Probably also exists as a membrane-associated heterooligomeric complex (PubMed:10440380).</text>
</comment>
<comment type="subcellular location">
    <subcellularLocation>
        <location evidence="7">Periplasm</location>
    </subcellularLocation>
</comment>
<comment type="miscellaneous">
    <text evidence="2">X-ray crystallographic analysis includes a sulfate ion that is thought to be at the substrate-binding site.</text>
</comment>
<comment type="similarity">
    <text evidence="6">Belongs to the cytochrome c-552 family.</text>
</comment>
<comment type="sequence caution" evidence="6">
    <conflict type="erroneous initiation">
        <sequence resource="EMBL-CDS" id="CAB37320"/>
    </conflict>
</comment>
<organism>
    <name type="scientific">Sulfurospirillum deleyianum</name>
    <dbReference type="NCBI Taxonomy" id="65553"/>
    <lineage>
        <taxon>Bacteria</taxon>
        <taxon>Pseudomonadati</taxon>
        <taxon>Campylobacterota</taxon>
        <taxon>Epsilonproteobacteria</taxon>
        <taxon>Campylobacterales</taxon>
        <taxon>Sulfurospirillaceae</taxon>
        <taxon>Sulfurospirillum</taxon>
    </lineage>
</organism>